<name>RL17_CHLSY</name>
<evidence type="ECO:0000255" key="1">
    <source>
        <dbReference type="HAMAP-Rule" id="MF_01368"/>
    </source>
</evidence>
<evidence type="ECO:0000305" key="2"/>
<accession>B9LJG0</accession>
<sequence length="116" mass="13094">MRHRHAGKLLGRSYEHRKALYRNLMIALIEHKKIKTTLAKARAVQPEVEALISIAREDTPHARRMALSKLASKEAMRKLFTFAPTTYGGRNGGYTRITKLGPRRGDGAEMALIELI</sequence>
<reference key="1">
    <citation type="submission" date="2009-01" db="EMBL/GenBank/DDBJ databases">
        <title>Complete sequence of Chloroflexus sp. Y-400-fl.</title>
        <authorList>
            <consortium name="US DOE Joint Genome Institute"/>
            <person name="Lucas S."/>
            <person name="Copeland A."/>
            <person name="Lapidus A."/>
            <person name="Glavina del Rio T."/>
            <person name="Dalin E."/>
            <person name="Tice H."/>
            <person name="Bruce D."/>
            <person name="Goodwin L."/>
            <person name="Pitluck S."/>
            <person name="Sims D."/>
            <person name="Kiss H."/>
            <person name="Brettin T."/>
            <person name="Detter J.C."/>
            <person name="Han C."/>
            <person name="Larimer F."/>
            <person name="Land M."/>
            <person name="Hauser L."/>
            <person name="Kyrpides N."/>
            <person name="Ovchinnikova G."/>
            <person name="Bryant D.A."/>
            <person name="Richardson P."/>
        </authorList>
    </citation>
    <scope>NUCLEOTIDE SEQUENCE [LARGE SCALE GENOMIC DNA]</scope>
    <source>
        <strain>ATCC 29364 / DSM 637 / Y-400-fl</strain>
    </source>
</reference>
<comment type="subunit">
    <text evidence="1">Part of the 50S ribosomal subunit. Contacts protein L32.</text>
</comment>
<comment type="similarity">
    <text evidence="1">Belongs to the bacterial ribosomal protein bL17 family.</text>
</comment>
<keyword id="KW-0687">Ribonucleoprotein</keyword>
<keyword id="KW-0689">Ribosomal protein</keyword>
<protein>
    <recommendedName>
        <fullName evidence="1">Large ribosomal subunit protein bL17</fullName>
    </recommendedName>
    <alternativeName>
        <fullName evidence="2">50S ribosomal protein L17</fullName>
    </alternativeName>
</protein>
<gene>
    <name evidence="1" type="primary">rplQ</name>
    <name type="ordered locus">Chy400_2584</name>
</gene>
<feature type="chain" id="PRO_1000184010" description="Large ribosomal subunit protein bL17">
    <location>
        <begin position="1"/>
        <end position="116"/>
    </location>
</feature>
<organism>
    <name type="scientific">Chloroflexus aurantiacus (strain ATCC 29364 / DSM 637 / Y-400-fl)</name>
    <dbReference type="NCBI Taxonomy" id="480224"/>
    <lineage>
        <taxon>Bacteria</taxon>
        <taxon>Bacillati</taxon>
        <taxon>Chloroflexota</taxon>
        <taxon>Chloroflexia</taxon>
        <taxon>Chloroflexales</taxon>
        <taxon>Chloroflexineae</taxon>
        <taxon>Chloroflexaceae</taxon>
        <taxon>Chloroflexus</taxon>
    </lineage>
</organism>
<dbReference type="EMBL" id="CP001364">
    <property type="protein sequence ID" value="ACM53976.1"/>
    <property type="molecule type" value="Genomic_DNA"/>
</dbReference>
<dbReference type="SMR" id="B9LJG0"/>
<dbReference type="KEGG" id="chl:Chy400_2584"/>
<dbReference type="HOGENOM" id="CLU_074407_2_0_0"/>
<dbReference type="OrthoDB" id="9809073at2"/>
<dbReference type="GO" id="GO:0022625">
    <property type="term" value="C:cytosolic large ribosomal subunit"/>
    <property type="evidence" value="ECO:0007669"/>
    <property type="project" value="TreeGrafter"/>
</dbReference>
<dbReference type="GO" id="GO:0003735">
    <property type="term" value="F:structural constituent of ribosome"/>
    <property type="evidence" value="ECO:0007669"/>
    <property type="project" value="InterPro"/>
</dbReference>
<dbReference type="GO" id="GO:0006412">
    <property type="term" value="P:translation"/>
    <property type="evidence" value="ECO:0007669"/>
    <property type="project" value="UniProtKB-UniRule"/>
</dbReference>
<dbReference type="Gene3D" id="3.90.1030.10">
    <property type="entry name" value="Ribosomal protein L17"/>
    <property type="match status" value="1"/>
</dbReference>
<dbReference type="HAMAP" id="MF_01368">
    <property type="entry name" value="Ribosomal_bL17"/>
    <property type="match status" value="1"/>
</dbReference>
<dbReference type="InterPro" id="IPR000456">
    <property type="entry name" value="Ribosomal_bL17"/>
</dbReference>
<dbReference type="InterPro" id="IPR036373">
    <property type="entry name" value="Ribosomal_bL17_sf"/>
</dbReference>
<dbReference type="NCBIfam" id="TIGR00059">
    <property type="entry name" value="L17"/>
    <property type="match status" value="1"/>
</dbReference>
<dbReference type="PANTHER" id="PTHR14413:SF16">
    <property type="entry name" value="LARGE RIBOSOMAL SUBUNIT PROTEIN BL17M"/>
    <property type="match status" value="1"/>
</dbReference>
<dbReference type="PANTHER" id="PTHR14413">
    <property type="entry name" value="RIBOSOMAL PROTEIN L17"/>
    <property type="match status" value="1"/>
</dbReference>
<dbReference type="Pfam" id="PF01196">
    <property type="entry name" value="Ribosomal_L17"/>
    <property type="match status" value="1"/>
</dbReference>
<dbReference type="SUPFAM" id="SSF64263">
    <property type="entry name" value="Prokaryotic ribosomal protein L17"/>
    <property type="match status" value="1"/>
</dbReference>
<proteinExistence type="inferred from homology"/>